<sequence length="241" mass="27153">MSRGVSSFSIHNDSAADTKRIGYGMGEKSSAGSSRDQTYSVKPASDVKDKKKVSESHTFQVSENYRLTQTFGRLYSPIPFGRESRSKREYTLDYGMNNKSAIKFVFHGKEELKVNGGKVSVVVDKFKKSDKGAMDKLAQKFLTSIKKEKVETLFPVSLKLRLKLKESGEEYQTANINNNLSGHMVKDYSDLDKVVRQVLKSFFDLMPKDTDEGLVLFSEFIKQEAKPGSTIVPILIDYDTE</sequence>
<dbReference type="EMBL" id="AY509253">
    <property type="protein sequence ID" value="AAS00936.1"/>
    <property type="molecule type" value="Genomic_DNA"/>
</dbReference>
<dbReference type="RefSeq" id="YP_024589.1">
    <property type="nucleotide sequence ID" value="NC_005881.2"/>
</dbReference>
<dbReference type="KEGG" id="vg:2948200"/>
<dbReference type="Proteomes" id="UP000007021">
    <property type="component" value="Segment"/>
</dbReference>
<accession>Q6R7H9</accession>
<organism>
    <name type="scientific">Ostreid herpesvirus 1 (isolate France)</name>
    <name type="common">OsHV-1</name>
    <name type="synonym">Pacific oyster herpesvirus</name>
    <dbReference type="NCBI Taxonomy" id="654903"/>
    <lineage>
        <taxon>Viruses</taxon>
        <taxon>Duplodnaviria</taxon>
        <taxon>Heunggongvirae</taxon>
        <taxon>Peploviricota</taxon>
        <taxon>Herviviricetes</taxon>
        <taxon>Herpesvirales</taxon>
        <taxon>Malacoherpesviridae</taxon>
        <taxon>Ostreavirus</taxon>
        <taxon>Ostreavirus ostreidmalaco1</taxon>
        <taxon>Ostreid herpesvirus 1</taxon>
    </lineage>
</organism>
<proteinExistence type="predicted"/>
<name>Y045_OSHVF</name>
<organismHost>
    <name type="scientific">Magallana gigas</name>
    <name type="common">Pacific oyster</name>
    <name type="synonym">Crassostrea gigas</name>
    <dbReference type="NCBI Taxonomy" id="29159"/>
</organismHost>
<organismHost>
    <name type="scientific">Pecten maximus</name>
    <name type="common">King scallop</name>
    <name type="synonym">Pilgrim's clam</name>
    <dbReference type="NCBI Taxonomy" id="6579"/>
</organismHost>
<protein>
    <recommendedName>
        <fullName>Uncharacterized protein ORF45</fullName>
    </recommendedName>
</protein>
<keyword id="KW-1185">Reference proteome</keyword>
<reference key="1">
    <citation type="journal article" date="2005" name="J. Gen. Virol.">
        <title>A novel class of herpesvirus with bivalve hosts.</title>
        <authorList>
            <person name="Davison A.J."/>
            <person name="Trus B.L."/>
            <person name="Cheng N."/>
            <person name="Steven A.C."/>
            <person name="Watson M.S."/>
            <person name="Cunningham C."/>
            <person name="Le Deuff R.M."/>
            <person name="Renault T."/>
        </authorList>
    </citation>
    <scope>NUCLEOTIDE SEQUENCE [LARGE SCALE GENOMIC DNA]</scope>
</reference>
<evidence type="ECO:0000256" key="1">
    <source>
        <dbReference type="SAM" id="MobiDB-lite"/>
    </source>
</evidence>
<feature type="chain" id="PRO_0000385073" description="Uncharacterized protein ORF45">
    <location>
        <begin position="1"/>
        <end position="241"/>
    </location>
</feature>
<feature type="region of interest" description="Disordered" evidence="1">
    <location>
        <begin position="19"/>
        <end position="53"/>
    </location>
</feature>
<feature type="compositionally biased region" description="Polar residues" evidence="1">
    <location>
        <begin position="30"/>
        <end position="39"/>
    </location>
</feature>
<gene>
    <name type="ORF">ORF45</name>
</gene>